<proteinExistence type="inferred from homology"/>
<accession>Q0APW8</accession>
<dbReference type="EC" id="7.6.2.-" evidence="1"/>
<dbReference type="EMBL" id="CP000449">
    <property type="protein sequence ID" value="ABI65669.1"/>
    <property type="molecule type" value="Genomic_DNA"/>
</dbReference>
<dbReference type="RefSeq" id="WP_011643316.1">
    <property type="nucleotide sequence ID" value="NC_008347.1"/>
</dbReference>
<dbReference type="SMR" id="Q0APW8"/>
<dbReference type="STRING" id="394221.Mmar10_1377"/>
<dbReference type="KEGG" id="mmr:Mmar10_1377"/>
<dbReference type="eggNOG" id="COG1136">
    <property type="taxonomic scope" value="Bacteria"/>
</dbReference>
<dbReference type="HOGENOM" id="CLU_000604_1_22_5"/>
<dbReference type="OrthoDB" id="7627620at2"/>
<dbReference type="Proteomes" id="UP000001964">
    <property type="component" value="Chromosome"/>
</dbReference>
<dbReference type="GO" id="GO:0005886">
    <property type="term" value="C:plasma membrane"/>
    <property type="evidence" value="ECO:0007669"/>
    <property type="project" value="UniProtKB-SubCell"/>
</dbReference>
<dbReference type="GO" id="GO:0005524">
    <property type="term" value="F:ATP binding"/>
    <property type="evidence" value="ECO:0007669"/>
    <property type="project" value="UniProtKB-KW"/>
</dbReference>
<dbReference type="GO" id="GO:0016887">
    <property type="term" value="F:ATP hydrolysis activity"/>
    <property type="evidence" value="ECO:0007669"/>
    <property type="project" value="InterPro"/>
</dbReference>
<dbReference type="GO" id="GO:0022857">
    <property type="term" value="F:transmembrane transporter activity"/>
    <property type="evidence" value="ECO:0007669"/>
    <property type="project" value="TreeGrafter"/>
</dbReference>
<dbReference type="GO" id="GO:0044874">
    <property type="term" value="P:lipoprotein localization to outer membrane"/>
    <property type="evidence" value="ECO:0007669"/>
    <property type="project" value="TreeGrafter"/>
</dbReference>
<dbReference type="GO" id="GO:0089705">
    <property type="term" value="P:protein localization to outer membrane"/>
    <property type="evidence" value="ECO:0007669"/>
    <property type="project" value="TreeGrafter"/>
</dbReference>
<dbReference type="CDD" id="cd03255">
    <property type="entry name" value="ABC_MJ0796_LolCDE_FtsE"/>
    <property type="match status" value="1"/>
</dbReference>
<dbReference type="FunFam" id="3.40.50.300:FF:000032">
    <property type="entry name" value="Export ABC transporter ATP-binding protein"/>
    <property type="match status" value="1"/>
</dbReference>
<dbReference type="Gene3D" id="3.40.50.300">
    <property type="entry name" value="P-loop containing nucleotide triphosphate hydrolases"/>
    <property type="match status" value="1"/>
</dbReference>
<dbReference type="InterPro" id="IPR003593">
    <property type="entry name" value="AAA+_ATPase"/>
</dbReference>
<dbReference type="InterPro" id="IPR003439">
    <property type="entry name" value="ABC_transporter-like_ATP-bd"/>
</dbReference>
<dbReference type="InterPro" id="IPR017871">
    <property type="entry name" value="ABC_transporter-like_CS"/>
</dbReference>
<dbReference type="InterPro" id="IPR015854">
    <property type="entry name" value="ABC_transpr_LolD-like"/>
</dbReference>
<dbReference type="InterPro" id="IPR017911">
    <property type="entry name" value="MacB-like_ATP-bd"/>
</dbReference>
<dbReference type="InterPro" id="IPR027417">
    <property type="entry name" value="P-loop_NTPase"/>
</dbReference>
<dbReference type="PANTHER" id="PTHR24220">
    <property type="entry name" value="IMPORT ATP-BINDING PROTEIN"/>
    <property type="match status" value="1"/>
</dbReference>
<dbReference type="PANTHER" id="PTHR24220:SF689">
    <property type="entry name" value="LIPOPROTEIN-RELEASING SYSTEM ATP-BINDING PROTEIN LOLD"/>
    <property type="match status" value="1"/>
</dbReference>
<dbReference type="Pfam" id="PF00005">
    <property type="entry name" value="ABC_tran"/>
    <property type="match status" value="1"/>
</dbReference>
<dbReference type="SMART" id="SM00382">
    <property type="entry name" value="AAA"/>
    <property type="match status" value="1"/>
</dbReference>
<dbReference type="SUPFAM" id="SSF52540">
    <property type="entry name" value="P-loop containing nucleoside triphosphate hydrolases"/>
    <property type="match status" value="1"/>
</dbReference>
<dbReference type="PROSITE" id="PS00211">
    <property type="entry name" value="ABC_TRANSPORTER_1"/>
    <property type="match status" value="1"/>
</dbReference>
<dbReference type="PROSITE" id="PS50893">
    <property type="entry name" value="ABC_TRANSPORTER_2"/>
    <property type="match status" value="1"/>
</dbReference>
<dbReference type="PROSITE" id="PS51244">
    <property type="entry name" value="LOLD"/>
    <property type="match status" value="1"/>
</dbReference>
<reference key="1">
    <citation type="submission" date="2006-08" db="EMBL/GenBank/DDBJ databases">
        <title>Complete sequence of Maricaulis maris MCS10.</title>
        <authorList>
            <consortium name="US DOE Joint Genome Institute"/>
            <person name="Copeland A."/>
            <person name="Lucas S."/>
            <person name="Lapidus A."/>
            <person name="Barry K."/>
            <person name="Detter J.C."/>
            <person name="Glavina del Rio T."/>
            <person name="Hammon N."/>
            <person name="Israni S."/>
            <person name="Dalin E."/>
            <person name="Tice H."/>
            <person name="Pitluck S."/>
            <person name="Saunders E."/>
            <person name="Brettin T."/>
            <person name="Bruce D."/>
            <person name="Han C."/>
            <person name="Tapia R."/>
            <person name="Gilna P."/>
            <person name="Schmutz J."/>
            <person name="Larimer F."/>
            <person name="Land M."/>
            <person name="Hauser L."/>
            <person name="Kyrpides N."/>
            <person name="Mikhailova N."/>
            <person name="Viollier P."/>
            <person name="Stephens C."/>
            <person name="Richardson P."/>
        </authorList>
    </citation>
    <scope>NUCLEOTIDE SEQUENCE [LARGE SCALE GENOMIC DNA]</scope>
    <source>
        <strain>MCS10</strain>
    </source>
</reference>
<feature type="chain" id="PRO_0000272104" description="Lipoprotein-releasing system ATP-binding protein LolD">
    <location>
        <begin position="1"/>
        <end position="229"/>
    </location>
</feature>
<feature type="domain" description="ABC transporter" evidence="1">
    <location>
        <begin position="6"/>
        <end position="229"/>
    </location>
</feature>
<feature type="binding site" evidence="1">
    <location>
        <begin position="42"/>
        <end position="49"/>
    </location>
    <ligand>
        <name>ATP</name>
        <dbReference type="ChEBI" id="CHEBI:30616"/>
    </ligand>
</feature>
<evidence type="ECO:0000255" key="1">
    <source>
        <dbReference type="HAMAP-Rule" id="MF_01708"/>
    </source>
</evidence>
<keyword id="KW-0067">ATP-binding</keyword>
<keyword id="KW-0997">Cell inner membrane</keyword>
<keyword id="KW-1003">Cell membrane</keyword>
<keyword id="KW-0472">Membrane</keyword>
<keyword id="KW-0547">Nucleotide-binding</keyword>
<keyword id="KW-1185">Reference proteome</keyword>
<keyword id="KW-1278">Translocase</keyword>
<keyword id="KW-0813">Transport</keyword>
<organism>
    <name type="scientific">Maricaulis maris (strain MCS10)</name>
    <name type="common">Caulobacter maris</name>
    <dbReference type="NCBI Taxonomy" id="394221"/>
    <lineage>
        <taxon>Bacteria</taxon>
        <taxon>Pseudomonadati</taxon>
        <taxon>Pseudomonadota</taxon>
        <taxon>Alphaproteobacteria</taxon>
        <taxon>Maricaulales</taxon>
        <taxon>Maricaulaceae</taxon>
        <taxon>Maricaulis</taxon>
    </lineage>
</organism>
<gene>
    <name evidence="1" type="primary">lolD</name>
    <name type="ordered locus">Mmar10_1377</name>
</gene>
<name>LOLD_MARMM</name>
<protein>
    <recommendedName>
        <fullName evidence="1">Lipoprotein-releasing system ATP-binding protein LolD</fullName>
        <ecNumber evidence="1">7.6.2.-</ecNumber>
    </recommendedName>
</protein>
<sequence>MSDFVLELDAIERTYVTEAGELPVLRGASLSLAPGEIVGLVGPSGSGKSSLLHAAGLLERPDAGEVRVRGQATRDLDDRARTAIRRRDIGFVYQFHHLLPEFDALENIVLPQLIAGVPSARARQRAEELLTRLGLAERLLHQPSQLSGGEQQRVAIARALANAPHVLLADEPTGNLDPDTSDTVFAAFRDTVRAEGAAALVATHNHELAGRMDRILTFADGHLTPYVPA</sequence>
<comment type="function">
    <text evidence="1">Part of the ABC transporter complex LolCDE involved in the translocation of mature outer membrane-directed lipoproteins, from the inner membrane to the periplasmic chaperone, LolA. Responsible for the formation of the LolA-lipoprotein complex in an ATP-dependent manner.</text>
</comment>
<comment type="subunit">
    <text evidence="1">The complex is composed of two ATP-binding proteins (LolD) and two transmembrane proteins (LolC and LolE).</text>
</comment>
<comment type="subcellular location">
    <subcellularLocation>
        <location evidence="1">Cell inner membrane</location>
        <topology evidence="1">Peripheral membrane protein</topology>
    </subcellularLocation>
</comment>
<comment type="similarity">
    <text evidence="1">Belongs to the ABC transporter superfamily. Lipoprotein translocase (TC 3.A.1.125) family.</text>
</comment>